<name>RPO11_PICTO</name>
<gene>
    <name evidence="1" type="primary">rpo11</name>
    <name evidence="1" type="synonym">rpoL</name>
    <name type="ordered locus">PTO0413</name>
</gene>
<accession>Q6L204</accession>
<protein>
    <recommendedName>
        <fullName evidence="1">DNA-directed RNA polymerase subunit Rpo11</fullName>
        <ecNumber evidence="1">2.7.7.6</ecNumber>
    </recommendedName>
    <alternativeName>
        <fullName evidence="1">DNA-directed RNA polymerase subunit L</fullName>
    </alternativeName>
</protein>
<sequence length="100" mass="11773">MNDAHFNIISKDKNSITVEMINYDNTLLRPLVEEISRDDSVDEIHYYIKHPNLDNPQIHVKVKSGKPQSAIKKSIRRIDRIYNSLIDDLEREEKRLNVSK</sequence>
<reference key="1">
    <citation type="journal article" date="2004" name="Proc. Natl. Acad. Sci. U.S.A.">
        <title>Genome sequence of Picrophilus torridus and its implications for life around pH 0.</title>
        <authorList>
            <person name="Fuetterer O."/>
            <person name="Angelov A."/>
            <person name="Liesegang H."/>
            <person name="Gottschalk G."/>
            <person name="Schleper C."/>
            <person name="Schepers B."/>
            <person name="Dock C."/>
            <person name="Antranikian G."/>
            <person name="Liebl W."/>
        </authorList>
    </citation>
    <scope>NUCLEOTIDE SEQUENCE [LARGE SCALE GENOMIC DNA]</scope>
    <source>
        <strain>ATCC 700027 / DSM 9790 / JCM 10055 / NBRC 100828 / KAW 2/3</strain>
    </source>
</reference>
<comment type="function">
    <text evidence="1">DNA-dependent RNA polymerase (RNAP) catalyzes the transcription of DNA into RNA using the four ribonucleoside triphosphates as substrates.</text>
</comment>
<comment type="catalytic activity">
    <reaction evidence="1">
        <text>RNA(n) + a ribonucleoside 5'-triphosphate = RNA(n+1) + diphosphate</text>
        <dbReference type="Rhea" id="RHEA:21248"/>
        <dbReference type="Rhea" id="RHEA-COMP:14527"/>
        <dbReference type="Rhea" id="RHEA-COMP:17342"/>
        <dbReference type="ChEBI" id="CHEBI:33019"/>
        <dbReference type="ChEBI" id="CHEBI:61557"/>
        <dbReference type="ChEBI" id="CHEBI:140395"/>
        <dbReference type="EC" id="2.7.7.6"/>
    </reaction>
</comment>
<comment type="subunit">
    <text evidence="1">Part of the RNA polymerase complex.</text>
</comment>
<comment type="subcellular location">
    <subcellularLocation>
        <location evidence="1">Cytoplasm</location>
    </subcellularLocation>
</comment>
<comment type="similarity">
    <text evidence="1">Belongs to the archaeal Rpo11/eukaryotic RPB11/RPC19 RNA polymerase subunit family.</text>
</comment>
<proteinExistence type="inferred from homology"/>
<keyword id="KW-0963">Cytoplasm</keyword>
<keyword id="KW-0240">DNA-directed RNA polymerase</keyword>
<keyword id="KW-0548">Nucleotidyltransferase</keyword>
<keyword id="KW-0804">Transcription</keyword>
<keyword id="KW-0808">Transferase</keyword>
<organism>
    <name type="scientific">Picrophilus torridus (strain ATCC 700027 / DSM 9790 / JCM 10055 / NBRC 100828 / KAW 2/3)</name>
    <dbReference type="NCBI Taxonomy" id="1122961"/>
    <lineage>
        <taxon>Archaea</taxon>
        <taxon>Methanobacteriati</taxon>
        <taxon>Thermoplasmatota</taxon>
        <taxon>Thermoplasmata</taxon>
        <taxon>Thermoplasmatales</taxon>
        <taxon>Picrophilaceae</taxon>
        <taxon>Picrophilus</taxon>
    </lineage>
</organism>
<feature type="chain" id="PRO_0000149332" description="DNA-directed RNA polymerase subunit Rpo11">
    <location>
        <begin position="1"/>
        <end position="100"/>
    </location>
</feature>
<evidence type="ECO:0000255" key="1">
    <source>
        <dbReference type="HAMAP-Rule" id="MF_00261"/>
    </source>
</evidence>
<dbReference type="EC" id="2.7.7.6" evidence="1"/>
<dbReference type="EMBL" id="AE017261">
    <property type="protein sequence ID" value="AAT42998.1"/>
    <property type="molecule type" value="Genomic_DNA"/>
</dbReference>
<dbReference type="RefSeq" id="WP_011177214.1">
    <property type="nucleotide sequence ID" value="NC_005877.1"/>
</dbReference>
<dbReference type="SMR" id="Q6L204"/>
<dbReference type="STRING" id="263820.PTO0413"/>
<dbReference type="PaxDb" id="263820-PTO0413"/>
<dbReference type="GeneID" id="2843957"/>
<dbReference type="KEGG" id="pto:PTO0413"/>
<dbReference type="eggNOG" id="arCOG04111">
    <property type="taxonomic scope" value="Archaea"/>
</dbReference>
<dbReference type="HOGENOM" id="CLU_090381_5_2_2"/>
<dbReference type="InParanoid" id="Q6L204"/>
<dbReference type="OrthoDB" id="24205at2157"/>
<dbReference type="Proteomes" id="UP000000438">
    <property type="component" value="Chromosome"/>
</dbReference>
<dbReference type="GO" id="GO:0005737">
    <property type="term" value="C:cytoplasm"/>
    <property type="evidence" value="ECO:0007669"/>
    <property type="project" value="UniProtKB-SubCell"/>
</dbReference>
<dbReference type="GO" id="GO:0000428">
    <property type="term" value="C:DNA-directed RNA polymerase complex"/>
    <property type="evidence" value="ECO:0007669"/>
    <property type="project" value="UniProtKB-KW"/>
</dbReference>
<dbReference type="GO" id="GO:0003677">
    <property type="term" value="F:DNA binding"/>
    <property type="evidence" value="ECO:0007669"/>
    <property type="project" value="InterPro"/>
</dbReference>
<dbReference type="GO" id="GO:0003899">
    <property type="term" value="F:DNA-directed RNA polymerase activity"/>
    <property type="evidence" value="ECO:0007669"/>
    <property type="project" value="UniProtKB-UniRule"/>
</dbReference>
<dbReference type="GO" id="GO:0046983">
    <property type="term" value="F:protein dimerization activity"/>
    <property type="evidence" value="ECO:0007669"/>
    <property type="project" value="InterPro"/>
</dbReference>
<dbReference type="GO" id="GO:0006351">
    <property type="term" value="P:DNA-templated transcription"/>
    <property type="evidence" value="ECO:0007669"/>
    <property type="project" value="UniProtKB-UniRule"/>
</dbReference>
<dbReference type="Gene3D" id="3.30.1360.10">
    <property type="entry name" value="RNA polymerase, RBP11-like subunit"/>
    <property type="match status" value="1"/>
</dbReference>
<dbReference type="HAMAP" id="MF_00261">
    <property type="entry name" value="RNApol_arch_Rpo11"/>
    <property type="match status" value="1"/>
</dbReference>
<dbReference type="InterPro" id="IPR036603">
    <property type="entry name" value="RBP11-like"/>
</dbReference>
<dbReference type="InterPro" id="IPR009025">
    <property type="entry name" value="RBP11-like_dimer"/>
</dbReference>
<dbReference type="InterPro" id="IPR008193">
    <property type="entry name" value="RNA_pol_Rpb11_13-16kDa_CS"/>
</dbReference>
<dbReference type="InterPro" id="IPR022905">
    <property type="entry name" value="Rpo11-like"/>
</dbReference>
<dbReference type="NCBIfam" id="NF002241">
    <property type="entry name" value="PRK01146.2-5"/>
    <property type="match status" value="1"/>
</dbReference>
<dbReference type="Pfam" id="PF13656">
    <property type="entry name" value="RNA_pol_L_2"/>
    <property type="match status" value="1"/>
</dbReference>
<dbReference type="SUPFAM" id="SSF55257">
    <property type="entry name" value="RBP11-like subunits of RNA polymerase"/>
    <property type="match status" value="1"/>
</dbReference>
<dbReference type="PROSITE" id="PS01154">
    <property type="entry name" value="RNA_POL_L_13KD"/>
    <property type="match status" value="1"/>
</dbReference>